<protein>
    <recommendedName>
        <fullName evidence="1">Flagellar hook-basal body complex protein FliE</fullName>
    </recommendedName>
</protein>
<gene>
    <name evidence="1" type="primary">fliE</name>
    <name type="ordered locus">PputGB1_3931</name>
</gene>
<feature type="chain" id="PRO_1000083312" description="Flagellar hook-basal body complex protein FliE">
    <location>
        <begin position="1"/>
        <end position="110"/>
    </location>
</feature>
<proteinExistence type="inferred from homology"/>
<keyword id="KW-0975">Bacterial flagellum</keyword>
<reference key="1">
    <citation type="submission" date="2008-01" db="EMBL/GenBank/DDBJ databases">
        <title>Complete sequence of Pseudomonas putida GB-1.</title>
        <authorList>
            <consortium name="US DOE Joint Genome Institute"/>
            <person name="Copeland A."/>
            <person name="Lucas S."/>
            <person name="Lapidus A."/>
            <person name="Barry K."/>
            <person name="Glavina del Rio T."/>
            <person name="Dalin E."/>
            <person name="Tice H."/>
            <person name="Pitluck S."/>
            <person name="Bruce D."/>
            <person name="Goodwin L."/>
            <person name="Chertkov O."/>
            <person name="Brettin T."/>
            <person name="Detter J.C."/>
            <person name="Han C."/>
            <person name="Kuske C.R."/>
            <person name="Schmutz J."/>
            <person name="Larimer F."/>
            <person name="Land M."/>
            <person name="Hauser L."/>
            <person name="Kyrpides N."/>
            <person name="Kim E."/>
            <person name="McCarthy J.K."/>
            <person name="Richardson P."/>
        </authorList>
    </citation>
    <scope>NUCLEOTIDE SEQUENCE [LARGE SCALE GENOMIC DNA]</scope>
    <source>
        <strain>GB-1</strain>
    </source>
</reference>
<comment type="subcellular location">
    <subcellularLocation>
        <location evidence="1">Bacterial flagellum basal body</location>
    </subcellularLocation>
</comment>
<comment type="similarity">
    <text evidence="1">Belongs to the FliE family.</text>
</comment>
<sequence length="110" mass="11878">MSQGVEFNRLMLDMRAMQADAMSLPKVTAAPELAPGQSTFADMLGQAIGKVHETQQASTQLANAFEIGKSGVDLTDVMIASQKASVSMQAMTQVRNKLVQAYQDIMQMPV</sequence>
<organism>
    <name type="scientific">Pseudomonas putida (strain GB-1)</name>
    <dbReference type="NCBI Taxonomy" id="76869"/>
    <lineage>
        <taxon>Bacteria</taxon>
        <taxon>Pseudomonadati</taxon>
        <taxon>Pseudomonadota</taxon>
        <taxon>Gammaproteobacteria</taxon>
        <taxon>Pseudomonadales</taxon>
        <taxon>Pseudomonadaceae</taxon>
        <taxon>Pseudomonas</taxon>
    </lineage>
</organism>
<name>FLIE_PSEPG</name>
<accession>B0KQZ5</accession>
<dbReference type="EMBL" id="CP000926">
    <property type="protein sequence ID" value="ABY99821.1"/>
    <property type="molecule type" value="Genomic_DNA"/>
</dbReference>
<dbReference type="RefSeq" id="WP_003254438.1">
    <property type="nucleotide sequence ID" value="NC_010322.1"/>
</dbReference>
<dbReference type="SMR" id="B0KQZ5"/>
<dbReference type="GeneID" id="83678920"/>
<dbReference type="KEGG" id="ppg:PputGB1_3931"/>
<dbReference type="eggNOG" id="COG1677">
    <property type="taxonomic scope" value="Bacteria"/>
</dbReference>
<dbReference type="HOGENOM" id="CLU_147249_0_0_6"/>
<dbReference type="Proteomes" id="UP000002157">
    <property type="component" value="Chromosome"/>
</dbReference>
<dbReference type="GO" id="GO:0009425">
    <property type="term" value="C:bacterial-type flagellum basal body"/>
    <property type="evidence" value="ECO:0007669"/>
    <property type="project" value="UniProtKB-SubCell"/>
</dbReference>
<dbReference type="GO" id="GO:0003774">
    <property type="term" value="F:cytoskeletal motor activity"/>
    <property type="evidence" value="ECO:0007669"/>
    <property type="project" value="InterPro"/>
</dbReference>
<dbReference type="GO" id="GO:0005198">
    <property type="term" value="F:structural molecule activity"/>
    <property type="evidence" value="ECO:0007669"/>
    <property type="project" value="InterPro"/>
</dbReference>
<dbReference type="GO" id="GO:0071973">
    <property type="term" value="P:bacterial-type flagellum-dependent cell motility"/>
    <property type="evidence" value="ECO:0007669"/>
    <property type="project" value="InterPro"/>
</dbReference>
<dbReference type="HAMAP" id="MF_00724">
    <property type="entry name" value="FliE"/>
    <property type="match status" value="1"/>
</dbReference>
<dbReference type="InterPro" id="IPR001624">
    <property type="entry name" value="FliE"/>
</dbReference>
<dbReference type="NCBIfam" id="TIGR00205">
    <property type="entry name" value="fliE"/>
    <property type="match status" value="1"/>
</dbReference>
<dbReference type="PANTHER" id="PTHR34653">
    <property type="match status" value="1"/>
</dbReference>
<dbReference type="PANTHER" id="PTHR34653:SF1">
    <property type="entry name" value="FLAGELLAR HOOK-BASAL BODY COMPLEX PROTEIN FLIE"/>
    <property type="match status" value="1"/>
</dbReference>
<dbReference type="Pfam" id="PF02049">
    <property type="entry name" value="FliE"/>
    <property type="match status" value="1"/>
</dbReference>
<dbReference type="PRINTS" id="PR01006">
    <property type="entry name" value="FLGHOOKFLIE"/>
</dbReference>
<evidence type="ECO:0000255" key="1">
    <source>
        <dbReference type="HAMAP-Rule" id="MF_00724"/>
    </source>
</evidence>